<comment type="subcellular location">
    <subcellularLocation>
        <location evidence="1">Mitochondrion</location>
    </subcellularLocation>
</comment>
<gene>
    <name type="ORF">CAWG_04269</name>
</gene>
<feature type="transit peptide" description="Mitochondrion" evidence="2">
    <location>
        <begin position="1"/>
        <end position="12"/>
    </location>
</feature>
<feature type="chain" id="PRO_0000202442" description="Uncharacterized protein CAWG_04269, mitochondrial">
    <location>
        <begin position="13"/>
        <end position="223"/>
    </location>
</feature>
<feature type="sequence conflict" description="In Ref. 2." evidence="3" ref="2">
    <original>LMEI</original>
    <variation>CRST</variation>
    <location>
        <begin position="90"/>
        <end position="93"/>
    </location>
</feature>
<feature type="sequence conflict" description="In Ref. 2." evidence="3" ref="2">
    <original>S</original>
    <variation>L</variation>
    <location>
        <position position="155"/>
    </location>
</feature>
<feature type="sequence conflict" description="In Ref. 2." evidence="3" ref="2">
    <original>KNQAPPQSTVVLH</original>
    <variation>QKPSTATKYCSAT</variation>
    <location>
        <begin position="159"/>
        <end position="171"/>
    </location>
</feature>
<organism>
    <name type="scientific">Candida albicans (strain WO-1)</name>
    <name type="common">Yeast</name>
    <dbReference type="NCBI Taxonomy" id="294748"/>
    <lineage>
        <taxon>Eukaryota</taxon>
        <taxon>Fungi</taxon>
        <taxon>Dikarya</taxon>
        <taxon>Ascomycota</taxon>
        <taxon>Saccharomycotina</taxon>
        <taxon>Pichiomycetes</taxon>
        <taxon>Debaryomycetaceae</taxon>
        <taxon>Candida/Lodderomyces clade</taxon>
        <taxon>Candida</taxon>
    </lineage>
</organism>
<sequence>MFRSLVRKTTPLLAFGVGIAAFPKDWRKGQFGDKKLLVINDSVLEQIRSTDRYKQLVNDPNLKHYNSSHAFPDQHHKNYVNTGLLFGPDLMEIDPIVFLDEKNGELTSFYHLGDKLISQDGQIHNGIVSTILDEGLCSAGFPLLPSKKGVTASLSIDFKNQAPPQSTVVLHAKVKEAKGRKVVIEGYLETLPLNKSETPLLIAESKCVLVEPKWFKYFAWLQV</sequence>
<proteinExistence type="evidence at transcript level"/>
<accession>P53716</accession>
<accession>C4YIJ3</accession>
<protein>
    <recommendedName>
        <fullName>Uncharacterized protein CAWG_04269, mitochondrial</fullName>
    </recommendedName>
</protein>
<name>YBJ5_CANAW</name>
<evidence type="ECO:0000250" key="1"/>
<evidence type="ECO:0000255" key="2"/>
<evidence type="ECO:0000305" key="3"/>
<keyword id="KW-0496">Mitochondrion</keyword>
<keyword id="KW-0809">Transit peptide</keyword>
<reference key="1">
    <citation type="journal article" date="2009" name="Nature">
        <title>Evolution of pathogenicity and sexual reproduction in eight Candida genomes.</title>
        <authorList>
            <person name="Butler G."/>
            <person name="Rasmussen M.D."/>
            <person name="Lin M.F."/>
            <person name="Santos M.A.S."/>
            <person name="Sakthikumar S."/>
            <person name="Munro C.A."/>
            <person name="Rheinbay E."/>
            <person name="Grabherr M."/>
            <person name="Forche A."/>
            <person name="Reedy J.L."/>
            <person name="Agrafioti I."/>
            <person name="Arnaud M.B."/>
            <person name="Bates S."/>
            <person name="Brown A.J.P."/>
            <person name="Brunke S."/>
            <person name="Costanzo M.C."/>
            <person name="Fitzpatrick D.A."/>
            <person name="de Groot P.W.J."/>
            <person name="Harris D."/>
            <person name="Hoyer L.L."/>
            <person name="Hube B."/>
            <person name="Klis F.M."/>
            <person name="Kodira C."/>
            <person name="Lennard N."/>
            <person name="Logue M.E."/>
            <person name="Martin R."/>
            <person name="Neiman A.M."/>
            <person name="Nikolaou E."/>
            <person name="Quail M.A."/>
            <person name="Quinn J."/>
            <person name="Santos M.C."/>
            <person name="Schmitzberger F.F."/>
            <person name="Sherlock G."/>
            <person name="Shah P."/>
            <person name="Silverstein K.A.T."/>
            <person name="Skrzypek M.S."/>
            <person name="Soll D."/>
            <person name="Staggs R."/>
            <person name="Stansfield I."/>
            <person name="Stumpf M.P.H."/>
            <person name="Sudbery P.E."/>
            <person name="Srikantha T."/>
            <person name="Zeng Q."/>
            <person name="Berman J."/>
            <person name="Berriman M."/>
            <person name="Heitman J."/>
            <person name="Gow N.A.R."/>
            <person name="Lorenz M.C."/>
            <person name="Birren B.W."/>
            <person name="Kellis M."/>
            <person name="Cuomo C.A."/>
        </authorList>
    </citation>
    <scope>NUCLEOTIDE SEQUENCE [LARGE SCALE GENOMIC DNA]</scope>
    <source>
        <strain>WO-1</strain>
    </source>
</reference>
<reference key="2">
    <citation type="journal article" date="1993" name="Gene">
        <title>A white-specific gene in the white-opaque switching system of Candida albicans.</title>
        <authorList>
            <person name="Srikantha T."/>
            <person name="Soll D.R."/>
        </authorList>
    </citation>
    <scope>NUCLEOTIDE SEQUENCE [MRNA] OF 90-223</scope>
    <source>
        <strain>WO-1</strain>
    </source>
</reference>
<dbReference type="EMBL" id="CH672350">
    <property type="protein sequence ID" value="EEQ45928.1"/>
    <property type="molecule type" value="Genomic_DNA"/>
</dbReference>
<dbReference type="SMR" id="P53716"/>
<dbReference type="PaxDb" id="5476-P53716"/>
<dbReference type="VEuPathDB" id="FungiDB:CAWG_04269"/>
<dbReference type="HOGENOM" id="CLU_052827_2_2_1"/>
<dbReference type="OMA" id="GRKCIIT"/>
<dbReference type="OrthoDB" id="2199at766764"/>
<dbReference type="Proteomes" id="UP000001429">
    <property type="component" value="Chromosome 2, Supercontig 1.5"/>
</dbReference>
<dbReference type="GO" id="GO:0005739">
    <property type="term" value="C:mitochondrion"/>
    <property type="evidence" value="ECO:0007669"/>
    <property type="project" value="UniProtKB-SubCell"/>
</dbReference>
<dbReference type="CDD" id="cd03443">
    <property type="entry name" value="PaaI_thioesterase"/>
    <property type="match status" value="1"/>
</dbReference>
<dbReference type="Gene3D" id="3.10.129.10">
    <property type="entry name" value="Hotdog Thioesterase"/>
    <property type="match status" value="1"/>
</dbReference>
<dbReference type="InterPro" id="IPR029069">
    <property type="entry name" value="HotDog_dom_sf"/>
</dbReference>
<dbReference type="InterPro" id="IPR052061">
    <property type="entry name" value="PTE-AB_protein"/>
</dbReference>
<dbReference type="InterPro" id="IPR006683">
    <property type="entry name" value="Thioestr_dom"/>
</dbReference>
<dbReference type="PANTHER" id="PTHR47260:SF4">
    <property type="entry name" value="MIOREX COMPLEX COMPONENT 3"/>
    <property type="match status" value="1"/>
</dbReference>
<dbReference type="PANTHER" id="PTHR47260">
    <property type="entry name" value="UPF0644 PROTEIN PB2B4.06"/>
    <property type="match status" value="1"/>
</dbReference>
<dbReference type="Pfam" id="PF03061">
    <property type="entry name" value="4HBT"/>
    <property type="match status" value="1"/>
</dbReference>
<dbReference type="SUPFAM" id="SSF54637">
    <property type="entry name" value="Thioesterase/thiol ester dehydrase-isomerase"/>
    <property type="match status" value="1"/>
</dbReference>